<evidence type="ECO:0000250" key="1">
    <source>
        <dbReference type="UniProtKB" id="P03891"/>
    </source>
</evidence>
<evidence type="ECO:0000250" key="2">
    <source>
        <dbReference type="UniProtKB" id="P03892"/>
    </source>
</evidence>
<evidence type="ECO:0000255" key="3"/>
<evidence type="ECO:0000305" key="4"/>
<name>NU2M_NYCAL</name>
<dbReference type="EC" id="7.1.1.2" evidence="1"/>
<dbReference type="EMBL" id="AY504588">
    <property type="protein sequence ID" value="AAS91453.1"/>
    <property type="molecule type" value="Genomic_DNA"/>
</dbReference>
<dbReference type="SMR" id="Q330A4"/>
<dbReference type="GO" id="GO:0005743">
    <property type="term" value="C:mitochondrial inner membrane"/>
    <property type="evidence" value="ECO:0000250"/>
    <property type="project" value="UniProtKB"/>
</dbReference>
<dbReference type="GO" id="GO:0008137">
    <property type="term" value="F:NADH dehydrogenase (ubiquinone) activity"/>
    <property type="evidence" value="ECO:0000250"/>
    <property type="project" value="UniProtKB"/>
</dbReference>
<dbReference type="GO" id="GO:0006120">
    <property type="term" value="P:mitochondrial electron transport, NADH to ubiquinone"/>
    <property type="evidence" value="ECO:0000250"/>
    <property type="project" value="UniProtKB"/>
</dbReference>
<dbReference type="GO" id="GO:0032981">
    <property type="term" value="P:mitochondrial respiratory chain complex I assembly"/>
    <property type="evidence" value="ECO:0000250"/>
    <property type="project" value="UniProtKB"/>
</dbReference>
<dbReference type="InterPro" id="IPR050175">
    <property type="entry name" value="Complex_I_Subunit_2"/>
</dbReference>
<dbReference type="InterPro" id="IPR010933">
    <property type="entry name" value="NADH_DH_su2_C"/>
</dbReference>
<dbReference type="InterPro" id="IPR003917">
    <property type="entry name" value="NADH_UbQ_OxRdtase_chain2"/>
</dbReference>
<dbReference type="InterPro" id="IPR001750">
    <property type="entry name" value="ND/Mrp_TM"/>
</dbReference>
<dbReference type="PANTHER" id="PTHR46552">
    <property type="entry name" value="NADH-UBIQUINONE OXIDOREDUCTASE CHAIN 2"/>
    <property type="match status" value="1"/>
</dbReference>
<dbReference type="PANTHER" id="PTHR46552:SF1">
    <property type="entry name" value="NADH-UBIQUINONE OXIDOREDUCTASE CHAIN 2"/>
    <property type="match status" value="1"/>
</dbReference>
<dbReference type="Pfam" id="PF06444">
    <property type="entry name" value="NADH_dehy_S2_C"/>
    <property type="match status" value="1"/>
</dbReference>
<dbReference type="Pfam" id="PF00361">
    <property type="entry name" value="Proton_antipo_M"/>
    <property type="match status" value="1"/>
</dbReference>
<dbReference type="PRINTS" id="PR01436">
    <property type="entry name" value="NADHDHGNASE2"/>
</dbReference>
<sequence length="347" mass="38871">MNPLIFTMILLTVMLGTAIVMTTSHWVMAWIGFEMNMLAVIPILMKKYNPRSMEASTKYFLTQATASMLLMLAIVINLVYSGQWSMTKPLTSTTSIIMTLALAMKLGLAPFHFWVPEVTQGVQLSSGLILLTWQKLAPMSILYQISPTINLDLLLLMSLLSILVGGWGGLNQTQLRKIMAYSSIAHMGWMTAIMVYNPTMALLNLVIYILLTTTTFMMLMMNSSTTTLSLSHMWNKTPLLTTAILTIMLSLGGLPPLSGFTPKWMIIQELTKNDNMIMPTIMAVMALLNLYFYMRLTYSTSLTMFPSTNNMKIKWQFSHKKPTANLSPLIILSTLILPLSPMLALLE</sequence>
<proteinExistence type="inferred from homology"/>
<gene>
    <name evidence="1" type="primary">MT-ND2</name>
    <name type="synonym">MTND2</name>
    <name type="synonym">NADH2</name>
    <name type="synonym">ND2</name>
</gene>
<organism>
    <name type="scientific">Nyctimene albiventer</name>
    <name type="common">Common tube-nosed fruit bat</name>
    <dbReference type="NCBI Taxonomy" id="48988"/>
    <lineage>
        <taxon>Eukaryota</taxon>
        <taxon>Metazoa</taxon>
        <taxon>Chordata</taxon>
        <taxon>Craniata</taxon>
        <taxon>Vertebrata</taxon>
        <taxon>Euteleostomi</taxon>
        <taxon>Mammalia</taxon>
        <taxon>Eutheria</taxon>
        <taxon>Laurasiatheria</taxon>
        <taxon>Chiroptera</taxon>
        <taxon>Yinpterochiroptera</taxon>
        <taxon>Pteropodoidea</taxon>
        <taxon>Pteropodidae</taxon>
        <taxon>Nyctimeninae</taxon>
        <taxon>Nyctimene</taxon>
    </lineage>
</organism>
<comment type="function">
    <text evidence="1">Core subunit of the mitochondrial membrane respiratory chain NADH dehydrogenase (Complex I) which catalyzes electron transfer from NADH through the respiratory chain, using ubiquinone as an electron acceptor. Essential for the catalytic activity and assembly of complex I.</text>
</comment>
<comment type="catalytic activity">
    <reaction evidence="1">
        <text>a ubiquinone + NADH + 5 H(+)(in) = a ubiquinol + NAD(+) + 4 H(+)(out)</text>
        <dbReference type="Rhea" id="RHEA:29091"/>
        <dbReference type="Rhea" id="RHEA-COMP:9565"/>
        <dbReference type="Rhea" id="RHEA-COMP:9566"/>
        <dbReference type="ChEBI" id="CHEBI:15378"/>
        <dbReference type="ChEBI" id="CHEBI:16389"/>
        <dbReference type="ChEBI" id="CHEBI:17976"/>
        <dbReference type="ChEBI" id="CHEBI:57540"/>
        <dbReference type="ChEBI" id="CHEBI:57945"/>
        <dbReference type="EC" id="7.1.1.2"/>
    </reaction>
</comment>
<comment type="subunit">
    <text evidence="1 2">Core subunit of respiratory chain NADH dehydrogenase (Complex I) which is composed of 45 different subunits. Interacts with TMEM242 (By similarity).</text>
</comment>
<comment type="subcellular location">
    <subcellularLocation>
        <location evidence="2">Mitochondrion inner membrane</location>
        <topology evidence="3">Multi-pass membrane protein</topology>
    </subcellularLocation>
</comment>
<comment type="similarity">
    <text evidence="4">Belongs to the complex I subunit 2 family.</text>
</comment>
<geneLocation type="mitochondrion"/>
<keyword id="KW-0249">Electron transport</keyword>
<keyword id="KW-0472">Membrane</keyword>
<keyword id="KW-0496">Mitochondrion</keyword>
<keyword id="KW-0999">Mitochondrion inner membrane</keyword>
<keyword id="KW-0520">NAD</keyword>
<keyword id="KW-0679">Respiratory chain</keyword>
<keyword id="KW-1278">Translocase</keyword>
<keyword id="KW-0812">Transmembrane</keyword>
<keyword id="KW-1133">Transmembrane helix</keyword>
<keyword id="KW-0813">Transport</keyword>
<keyword id="KW-0830">Ubiquinone</keyword>
<reference key="1">
    <citation type="submission" date="2003-12" db="EMBL/GenBank/DDBJ databases">
        <title>Bats and birds: flying in the face of mtDNA evolutionary rates.</title>
        <authorList>
            <person name="Worthington Wilmer J.M."/>
            <person name="Schneider C.J."/>
            <person name="Sorenson M.D."/>
        </authorList>
    </citation>
    <scope>NUCLEOTIDE SEQUENCE [GENOMIC DNA]</scope>
    <source>
        <strain>Isolate 1</strain>
    </source>
</reference>
<feature type="chain" id="PRO_0000256672" description="NADH-ubiquinone oxidoreductase chain 2">
    <location>
        <begin position="1"/>
        <end position="347"/>
    </location>
</feature>
<feature type="transmembrane region" description="Helical" evidence="3">
    <location>
        <begin position="3"/>
        <end position="23"/>
    </location>
</feature>
<feature type="transmembrane region" description="Helical" evidence="3">
    <location>
        <begin position="25"/>
        <end position="45"/>
    </location>
</feature>
<feature type="transmembrane region" description="Helical" evidence="3">
    <location>
        <begin position="59"/>
        <end position="79"/>
    </location>
</feature>
<feature type="transmembrane region" description="Helical" evidence="3">
    <location>
        <begin position="96"/>
        <end position="116"/>
    </location>
</feature>
<feature type="transmembrane region" description="Helical" evidence="3">
    <location>
        <begin position="122"/>
        <end position="142"/>
    </location>
</feature>
<feature type="transmembrane region" description="Helical" evidence="3">
    <location>
        <begin position="149"/>
        <end position="169"/>
    </location>
</feature>
<feature type="transmembrane region" description="Helical" evidence="3">
    <location>
        <begin position="178"/>
        <end position="198"/>
    </location>
</feature>
<feature type="transmembrane region" description="Helical" evidence="3">
    <location>
        <begin position="200"/>
        <end position="220"/>
    </location>
</feature>
<feature type="transmembrane region" description="Helical" evidence="3">
    <location>
        <begin position="240"/>
        <end position="260"/>
    </location>
</feature>
<feature type="transmembrane region" description="Helical" evidence="3">
    <location>
        <begin position="276"/>
        <end position="296"/>
    </location>
</feature>
<feature type="transmembrane region" description="Helical" evidence="3">
    <location>
        <begin position="326"/>
        <end position="346"/>
    </location>
</feature>
<protein>
    <recommendedName>
        <fullName evidence="1">NADH-ubiquinone oxidoreductase chain 2</fullName>
        <ecNumber evidence="1">7.1.1.2</ecNumber>
    </recommendedName>
    <alternativeName>
        <fullName>NADH dehydrogenase subunit 2</fullName>
    </alternativeName>
</protein>
<accession>Q330A4</accession>